<evidence type="ECO:0000255" key="1">
    <source>
        <dbReference type="HAMAP-Rule" id="MF_00377"/>
    </source>
</evidence>
<evidence type="ECO:0000256" key="2">
    <source>
        <dbReference type="SAM" id="MobiDB-lite"/>
    </source>
</evidence>
<keyword id="KW-0067">ATP-binding</keyword>
<keyword id="KW-0963">Cytoplasm</keyword>
<keyword id="KW-0235">DNA replication</keyword>
<keyword id="KW-0238">DNA-binding</keyword>
<keyword id="KW-0446">Lipid-binding</keyword>
<keyword id="KW-0547">Nucleotide-binding</keyword>
<keyword id="KW-1185">Reference proteome</keyword>
<reference key="1">
    <citation type="journal article" date="2008" name="J. Bacteriol.">
        <title>The genome of Heliobacterium modesticaldum, a phototrophic representative of the Firmicutes containing the simplest photosynthetic apparatus.</title>
        <authorList>
            <person name="Sattley W.M."/>
            <person name="Madigan M.T."/>
            <person name="Swingley W.D."/>
            <person name="Cheung P.C."/>
            <person name="Clocksin K.M."/>
            <person name="Conrad A.L."/>
            <person name="Dejesa L.C."/>
            <person name="Honchak B.M."/>
            <person name="Jung D.O."/>
            <person name="Karbach L.E."/>
            <person name="Kurdoglu A."/>
            <person name="Lahiri S."/>
            <person name="Mastrian S.D."/>
            <person name="Page L.E."/>
            <person name="Taylor H.L."/>
            <person name="Wang Z.T."/>
            <person name="Raymond J."/>
            <person name="Chen M."/>
            <person name="Blankenship R.E."/>
            <person name="Touchman J.W."/>
        </authorList>
    </citation>
    <scope>NUCLEOTIDE SEQUENCE [LARGE SCALE GENOMIC DNA]</scope>
    <source>
        <strain>ATCC 51547 / Ice1</strain>
    </source>
</reference>
<protein>
    <recommendedName>
        <fullName evidence="1">Chromosomal replication initiator protein DnaA</fullName>
    </recommendedName>
</protein>
<dbReference type="EMBL" id="CP000930">
    <property type="protein sequence ID" value="ABZ83660.1"/>
    <property type="molecule type" value="Genomic_DNA"/>
</dbReference>
<dbReference type="RefSeq" id="WP_012282183.1">
    <property type="nucleotide sequence ID" value="NC_010337.2"/>
</dbReference>
<dbReference type="SMR" id="B0TAK8"/>
<dbReference type="STRING" id="498761.HM1_0905"/>
<dbReference type="KEGG" id="hmo:HM1_0905"/>
<dbReference type="eggNOG" id="COG0593">
    <property type="taxonomic scope" value="Bacteria"/>
</dbReference>
<dbReference type="HOGENOM" id="CLU_026910_3_1_9"/>
<dbReference type="OrthoDB" id="9807019at2"/>
<dbReference type="Proteomes" id="UP000008550">
    <property type="component" value="Chromosome"/>
</dbReference>
<dbReference type="GO" id="GO:0005737">
    <property type="term" value="C:cytoplasm"/>
    <property type="evidence" value="ECO:0007669"/>
    <property type="project" value="UniProtKB-SubCell"/>
</dbReference>
<dbReference type="GO" id="GO:0005886">
    <property type="term" value="C:plasma membrane"/>
    <property type="evidence" value="ECO:0007669"/>
    <property type="project" value="TreeGrafter"/>
</dbReference>
<dbReference type="GO" id="GO:0005524">
    <property type="term" value="F:ATP binding"/>
    <property type="evidence" value="ECO:0007669"/>
    <property type="project" value="UniProtKB-UniRule"/>
</dbReference>
<dbReference type="GO" id="GO:0016887">
    <property type="term" value="F:ATP hydrolysis activity"/>
    <property type="evidence" value="ECO:0007669"/>
    <property type="project" value="InterPro"/>
</dbReference>
<dbReference type="GO" id="GO:0003688">
    <property type="term" value="F:DNA replication origin binding"/>
    <property type="evidence" value="ECO:0007669"/>
    <property type="project" value="UniProtKB-UniRule"/>
</dbReference>
<dbReference type="GO" id="GO:0008289">
    <property type="term" value="F:lipid binding"/>
    <property type="evidence" value="ECO:0007669"/>
    <property type="project" value="UniProtKB-KW"/>
</dbReference>
<dbReference type="GO" id="GO:0006270">
    <property type="term" value="P:DNA replication initiation"/>
    <property type="evidence" value="ECO:0007669"/>
    <property type="project" value="UniProtKB-UniRule"/>
</dbReference>
<dbReference type="GO" id="GO:0006275">
    <property type="term" value="P:regulation of DNA replication"/>
    <property type="evidence" value="ECO:0007669"/>
    <property type="project" value="UniProtKB-UniRule"/>
</dbReference>
<dbReference type="CDD" id="cd00009">
    <property type="entry name" value="AAA"/>
    <property type="match status" value="1"/>
</dbReference>
<dbReference type="CDD" id="cd06571">
    <property type="entry name" value="Bac_DnaA_C"/>
    <property type="match status" value="1"/>
</dbReference>
<dbReference type="FunFam" id="1.10.1750.10:FF:000003">
    <property type="entry name" value="Chromosomal replication initiator protein DnaA"/>
    <property type="match status" value="1"/>
</dbReference>
<dbReference type="FunFam" id="1.10.8.60:FF:000003">
    <property type="entry name" value="Chromosomal replication initiator protein DnaA"/>
    <property type="match status" value="1"/>
</dbReference>
<dbReference type="FunFam" id="3.40.50.300:FF:000150">
    <property type="entry name" value="Chromosomal replication initiator protein DnaA"/>
    <property type="match status" value="1"/>
</dbReference>
<dbReference type="Gene3D" id="1.10.1750.10">
    <property type="match status" value="1"/>
</dbReference>
<dbReference type="Gene3D" id="1.10.8.60">
    <property type="match status" value="1"/>
</dbReference>
<dbReference type="Gene3D" id="3.30.300.180">
    <property type="match status" value="1"/>
</dbReference>
<dbReference type="Gene3D" id="3.40.50.300">
    <property type="entry name" value="P-loop containing nucleotide triphosphate hydrolases"/>
    <property type="match status" value="1"/>
</dbReference>
<dbReference type="HAMAP" id="MF_00377">
    <property type="entry name" value="DnaA_bact"/>
    <property type="match status" value="1"/>
</dbReference>
<dbReference type="InterPro" id="IPR003593">
    <property type="entry name" value="AAA+_ATPase"/>
</dbReference>
<dbReference type="InterPro" id="IPR001957">
    <property type="entry name" value="Chromosome_initiator_DnaA"/>
</dbReference>
<dbReference type="InterPro" id="IPR020591">
    <property type="entry name" value="Chromosome_initiator_DnaA-like"/>
</dbReference>
<dbReference type="InterPro" id="IPR018312">
    <property type="entry name" value="Chromosome_initiator_DnaA_CS"/>
</dbReference>
<dbReference type="InterPro" id="IPR013159">
    <property type="entry name" value="DnaA_C"/>
</dbReference>
<dbReference type="InterPro" id="IPR013317">
    <property type="entry name" value="DnaA_dom"/>
</dbReference>
<dbReference type="InterPro" id="IPR024633">
    <property type="entry name" value="DnaA_N_dom"/>
</dbReference>
<dbReference type="InterPro" id="IPR038454">
    <property type="entry name" value="DnaA_N_sf"/>
</dbReference>
<dbReference type="InterPro" id="IPR027417">
    <property type="entry name" value="P-loop_NTPase"/>
</dbReference>
<dbReference type="InterPro" id="IPR010921">
    <property type="entry name" value="Trp_repressor/repl_initiator"/>
</dbReference>
<dbReference type="NCBIfam" id="TIGR00362">
    <property type="entry name" value="DnaA"/>
    <property type="match status" value="1"/>
</dbReference>
<dbReference type="NCBIfam" id="NF010686">
    <property type="entry name" value="PRK14086.1"/>
    <property type="match status" value="1"/>
</dbReference>
<dbReference type="PANTHER" id="PTHR30050">
    <property type="entry name" value="CHROMOSOMAL REPLICATION INITIATOR PROTEIN DNAA"/>
    <property type="match status" value="1"/>
</dbReference>
<dbReference type="PANTHER" id="PTHR30050:SF2">
    <property type="entry name" value="CHROMOSOMAL REPLICATION INITIATOR PROTEIN DNAA"/>
    <property type="match status" value="1"/>
</dbReference>
<dbReference type="Pfam" id="PF00308">
    <property type="entry name" value="Bac_DnaA"/>
    <property type="match status" value="1"/>
</dbReference>
<dbReference type="Pfam" id="PF08299">
    <property type="entry name" value="Bac_DnaA_C"/>
    <property type="match status" value="1"/>
</dbReference>
<dbReference type="Pfam" id="PF11638">
    <property type="entry name" value="DnaA_N"/>
    <property type="match status" value="1"/>
</dbReference>
<dbReference type="PRINTS" id="PR00051">
    <property type="entry name" value="DNAA"/>
</dbReference>
<dbReference type="SMART" id="SM00382">
    <property type="entry name" value="AAA"/>
    <property type="match status" value="1"/>
</dbReference>
<dbReference type="SMART" id="SM00760">
    <property type="entry name" value="Bac_DnaA_C"/>
    <property type="match status" value="1"/>
</dbReference>
<dbReference type="SUPFAM" id="SSF52540">
    <property type="entry name" value="P-loop containing nucleoside triphosphate hydrolases"/>
    <property type="match status" value="1"/>
</dbReference>
<dbReference type="SUPFAM" id="SSF48295">
    <property type="entry name" value="TrpR-like"/>
    <property type="match status" value="1"/>
</dbReference>
<dbReference type="PROSITE" id="PS01008">
    <property type="entry name" value="DNAA"/>
    <property type="match status" value="1"/>
</dbReference>
<gene>
    <name evidence="1" type="primary">dnaA</name>
    <name type="ordered locus">Helmi_10350</name>
    <name type="ORF">HM1_0905</name>
</gene>
<name>DNAA_HELMI</name>
<feature type="chain" id="PRO_1000121984" description="Chromosomal replication initiator protein DnaA">
    <location>
        <begin position="1"/>
        <end position="443"/>
    </location>
</feature>
<feature type="region of interest" description="Domain I, interacts with DnaA modulators" evidence="1">
    <location>
        <begin position="1"/>
        <end position="80"/>
    </location>
</feature>
<feature type="region of interest" description="Domain II" evidence="1">
    <location>
        <begin position="80"/>
        <end position="104"/>
    </location>
</feature>
<feature type="region of interest" description="Disordered" evidence="2">
    <location>
        <begin position="83"/>
        <end position="105"/>
    </location>
</feature>
<feature type="region of interest" description="Domain III, AAA+ region" evidence="1">
    <location>
        <begin position="105"/>
        <end position="321"/>
    </location>
</feature>
<feature type="region of interest" description="Domain IV, binds dsDNA" evidence="1">
    <location>
        <begin position="322"/>
        <end position="443"/>
    </location>
</feature>
<feature type="compositionally biased region" description="Basic and acidic residues" evidence="2">
    <location>
        <begin position="85"/>
        <end position="97"/>
    </location>
</feature>
<feature type="binding site" evidence="1">
    <location>
        <position position="149"/>
    </location>
    <ligand>
        <name>ATP</name>
        <dbReference type="ChEBI" id="CHEBI:30616"/>
    </ligand>
</feature>
<feature type="binding site" evidence="1">
    <location>
        <position position="151"/>
    </location>
    <ligand>
        <name>ATP</name>
        <dbReference type="ChEBI" id="CHEBI:30616"/>
    </ligand>
</feature>
<feature type="binding site" evidence="1">
    <location>
        <position position="152"/>
    </location>
    <ligand>
        <name>ATP</name>
        <dbReference type="ChEBI" id="CHEBI:30616"/>
    </ligand>
</feature>
<feature type="binding site" evidence="1">
    <location>
        <position position="153"/>
    </location>
    <ligand>
        <name>ATP</name>
        <dbReference type="ChEBI" id="CHEBI:30616"/>
    </ligand>
</feature>
<accession>B0TAK8</accession>
<proteinExistence type="inferred from homology"/>
<sequence length="443" mass="50374">MTSQFASLWQQSLEILKQELKPASFDTWLKNTQLVTIQNGEAHIGVPNDLARDWLENRYATLVKNALSVVLGESVEVRFFTPSADSRRSEPSRRPVATEESSPPLLNPKYTFDTFVVGNSNRFAHAAALAVAEAPAKAYNPLFVYGGVGLGKTHLMQAIGHFVIEQHPQSRVVYVSSEKFTNELINAIRDDKTVEFRNRYRNIDVLLIDDIQFLAGKERTQEEFFHTFNALHESSKQIIISSDRPPKEIPTLEDRLRSRFEWGLITDINPPDLETRIAILRKKAILENLDVPNEVMVFIANIIQSNIRELEGALNRVIAYANLSGKSLTSEVAEEALKNIIPSHRAKVITIALIQEIVAEHYNMRVEDFKAKKRTRDVAFPRQIAMYLSREMLDVSLPKIGEEFGGRDHTTVIHAHEKITKDIEKDPQLEMTIQVLKEKIQRA</sequence>
<comment type="function">
    <text evidence="1">Plays an essential role in the initiation and regulation of chromosomal replication. ATP-DnaA binds to the origin of replication (oriC) to initiate formation of the DNA replication initiation complex once per cell cycle. Binds the DnaA box (a 9 base pair repeat at the origin) and separates the double-stranded (ds)DNA. Forms a right-handed helical filament on oriC DNA; dsDNA binds to the exterior of the filament while single-stranded (ss)DNA is stabiized in the filament's interior. The ATP-DnaA-oriC complex binds and stabilizes one strand of the AT-rich DNA unwinding element (DUE), permitting loading of DNA polymerase. After initiation quickly degrades to an ADP-DnaA complex that is not apt for DNA replication. Binds acidic phospholipids.</text>
</comment>
<comment type="subunit">
    <text evidence="1">Oligomerizes as a right-handed, spiral filament on DNA at oriC.</text>
</comment>
<comment type="subcellular location">
    <subcellularLocation>
        <location evidence="1">Cytoplasm</location>
    </subcellularLocation>
</comment>
<comment type="domain">
    <text evidence="1">Domain I is involved in oligomerization and binding regulators, domain II is flexibile and of varying length in different bacteria, domain III forms the AAA+ region, while domain IV binds dsDNA.</text>
</comment>
<comment type="similarity">
    <text evidence="1">Belongs to the DnaA family.</text>
</comment>
<organism>
    <name type="scientific">Heliobacterium modesticaldum (strain ATCC 51547 / Ice1)</name>
    <dbReference type="NCBI Taxonomy" id="498761"/>
    <lineage>
        <taxon>Bacteria</taxon>
        <taxon>Bacillati</taxon>
        <taxon>Bacillota</taxon>
        <taxon>Clostridia</taxon>
        <taxon>Eubacteriales</taxon>
        <taxon>Heliobacteriaceae</taxon>
        <taxon>Heliomicrobium</taxon>
    </lineage>
</organism>